<name>Y206_LISMO</name>
<accession>P33383</accession>
<sequence>MYIKGRLIFFFVVLVIALCSVLILLIIKISVWKDEPFHLSDAKEIECLGSCEIKNTNQKIHFFSIKENLFEEKGDIAGILNEDEQKVADKSIFIVILDDEKGIANEE</sequence>
<gene>
    <name type="ordered locus">lmo0206</name>
</gene>
<protein>
    <recommendedName>
        <fullName>Uncharacterized protein Lmo0206</fullName>
    </recommendedName>
</protein>
<reference key="1">
    <citation type="journal article" date="1992" name="Infect. Immun.">
        <title>Nucleotide sequence of the lecithinase operon of Listeria monocytogenes and possible role of lecithinase in cell-to-cell spread.</title>
        <authorList>
            <person name="Vazquez-Boland J.-A."/>
            <person name="Kocks C."/>
            <person name="Dramsi S."/>
            <person name="Ohayon H."/>
            <person name="Geoffroy C."/>
            <person name="Mengaud J."/>
            <person name="Cossart P."/>
        </authorList>
    </citation>
    <scope>NUCLEOTIDE SEQUENCE [GENOMIC DNA]</scope>
    <source>
        <strain>LO28 / Serovar 1/2c</strain>
    </source>
</reference>
<reference key="2">
    <citation type="journal article" date="2001" name="Science">
        <title>Comparative genomics of Listeria species.</title>
        <authorList>
            <person name="Glaser P."/>
            <person name="Frangeul L."/>
            <person name="Buchrieser C."/>
            <person name="Rusniok C."/>
            <person name="Amend A."/>
            <person name="Baquero F."/>
            <person name="Berche P."/>
            <person name="Bloecker H."/>
            <person name="Brandt P."/>
            <person name="Chakraborty T."/>
            <person name="Charbit A."/>
            <person name="Chetouani F."/>
            <person name="Couve E."/>
            <person name="de Daruvar A."/>
            <person name="Dehoux P."/>
            <person name="Domann E."/>
            <person name="Dominguez-Bernal G."/>
            <person name="Duchaud E."/>
            <person name="Durant L."/>
            <person name="Dussurget O."/>
            <person name="Entian K.-D."/>
            <person name="Fsihi H."/>
            <person name="Garcia-del Portillo F."/>
            <person name="Garrido P."/>
            <person name="Gautier L."/>
            <person name="Goebel W."/>
            <person name="Gomez-Lopez N."/>
            <person name="Hain T."/>
            <person name="Hauf J."/>
            <person name="Jackson D."/>
            <person name="Jones L.-M."/>
            <person name="Kaerst U."/>
            <person name="Kreft J."/>
            <person name="Kuhn M."/>
            <person name="Kunst F."/>
            <person name="Kurapkat G."/>
            <person name="Madueno E."/>
            <person name="Maitournam A."/>
            <person name="Mata Vicente J."/>
            <person name="Ng E."/>
            <person name="Nedjari H."/>
            <person name="Nordsiek G."/>
            <person name="Novella S."/>
            <person name="de Pablos B."/>
            <person name="Perez-Diaz J.-C."/>
            <person name="Purcell R."/>
            <person name="Remmel B."/>
            <person name="Rose M."/>
            <person name="Schlueter T."/>
            <person name="Simoes N."/>
            <person name="Tierrez A."/>
            <person name="Vazquez-Boland J.-A."/>
            <person name="Voss H."/>
            <person name="Wehland J."/>
            <person name="Cossart P."/>
        </authorList>
    </citation>
    <scope>NUCLEOTIDE SEQUENCE [LARGE SCALE GENOMIC DNA]</scope>
    <source>
        <strain>ATCC BAA-679 / EGD-e</strain>
    </source>
</reference>
<dbReference type="EMBL" id="M82881">
    <property type="status" value="NOT_ANNOTATED_CDS"/>
    <property type="molecule type" value="Genomic_DNA"/>
</dbReference>
<dbReference type="EMBL" id="AL591974">
    <property type="protein sequence ID" value="CAD00733.1"/>
    <property type="molecule type" value="Genomic_DNA"/>
</dbReference>
<dbReference type="PIR" id="AG1100">
    <property type="entry name" value="AG1100"/>
</dbReference>
<dbReference type="PIR" id="D43868">
    <property type="entry name" value="D43868"/>
</dbReference>
<dbReference type="RefSeq" id="NP_463737.1">
    <property type="nucleotide sequence ID" value="NC_003210.1"/>
</dbReference>
<dbReference type="SMR" id="P33383"/>
<dbReference type="STRING" id="169963.gene:17592842"/>
<dbReference type="PaxDb" id="169963-lmo0206"/>
<dbReference type="EnsemblBacteria" id="CAD00733">
    <property type="protein sequence ID" value="CAD00733"/>
    <property type="gene ID" value="CAD00733"/>
</dbReference>
<dbReference type="GeneID" id="987037"/>
<dbReference type="KEGG" id="lmo:lmo0206"/>
<dbReference type="PATRIC" id="fig|169963.11.peg.211"/>
<dbReference type="eggNOG" id="ENOG5032PDQ">
    <property type="taxonomic scope" value="Bacteria"/>
</dbReference>
<dbReference type="HOGENOM" id="CLU_175481_0_0_9"/>
<dbReference type="BioCyc" id="LMON169963:LMO0206-MONOMER"/>
<dbReference type="PHI-base" id="PHI:7688"/>
<dbReference type="Proteomes" id="UP000000817">
    <property type="component" value="Chromosome"/>
</dbReference>
<dbReference type="InterPro" id="IPR035131">
    <property type="entry name" value="DUF5502"/>
</dbReference>
<dbReference type="Pfam" id="PF17606">
    <property type="entry name" value="DUF5502"/>
    <property type="match status" value="1"/>
</dbReference>
<proteinExistence type="inferred from homology"/>
<keyword id="KW-1185">Reference proteome</keyword>
<keyword id="KW-0732">Signal</keyword>
<organism>
    <name type="scientific">Listeria monocytogenes serovar 1/2a (strain ATCC BAA-679 / EGD-e)</name>
    <dbReference type="NCBI Taxonomy" id="169963"/>
    <lineage>
        <taxon>Bacteria</taxon>
        <taxon>Bacillati</taxon>
        <taxon>Bacillota</taxon>
        <taxon>Bacilli</taxon>
        <taxon>Bacillales</taxon>
        <taxon>Listeriaceae</taxon>
        <taxon>Listeria</taxon>
    </lineage>
</organism>
<evidence type="ECO:0000255" key="1"/>
<feature type="signal peptide" evidence="1">
    <location>
        <begin position="1"/>
        <end position="20"/>
    </location>
</feature>
<feature type="chain" id="PRO_0000013987" description="Uncharacterized protein Lmo0206">
    <location>
        <begin position="21"/>
        <end position="107"/>
    </location>
</feature>